<organism>
    <name type="scientific">Drosophila willistoni</name>
    <name type="common">Fruit fly</name>
    <dbReference type="NCBI Taxonomy" id="7260"/>
    <lineage>
        <taxon>Eukaryota</taxon>
        <taxon>Metazoa</taxon>
        <taxon>Ecdysozoa</taxon>
        <taxon>Arthropoda</taxon>
        <taxon>Hexapoda</taxon>
        <taxon>Insecta</taxon>
        <taxon>Pterygota</taxon>
        <taxon>Neoptera</taxon>
        <taxon>Endopterygota</taxon>
        <taxon>Diptera</taxon>
        <taxon>Brachycera</taxon>
        <taxon>Muscomorpha</taxon>
        <taxon>Ephydroidea</taxon>
        <taxon>Drosophilidae</taxon>
        <taxon>Drosophila</taxon>
        <taxon>Sophophora</taxon>
    </lineage>
</organism>
<comment type="function">
    <text evidence="1">Component of the integrator complex, a multiprotein complex that terminates RNA polymerase II (Pol II) transcription in the promoter-proximal region of genes. The integrator complex provides a quality checkpoint during transcription elongation by driving premature transcription termination of transcripts that are unfavorably configured for transcriptional elongation: the complex terminates transcription by (1) catalyzing dephosphorylation of the C-terminal domain (CTD) of Pol II subunit Polr2A/Rbp1 and Spt5, and (2) degrading the exiting nascent RNA transcript via endonuclease activity. The integrator complex is also involved in the 3'-end processing of the U7 snRNA, and also the spliceosomal snRNAs U1, U2, U4 and U5.</text>
</comment>
<comment type="subunit">
    <text evidence="1">Belongs to the multiprotein complex Integrator, at least composed of IntS1, IntS2, IntS3, IntS4, omd/IntS5, IntS6, defl/IntS7, IntS8, IntS9, IntS10, IntS11, IntS12, asun/IntS13, IntS14 and IntS15. The core complex associates with protein phosphatase 2A subunits mts/PP2A and Pp2A-29B, to form the Integrator-PP2A (INTAC) complex.</text>
</comment>
<comment type="subcellular location">
    <subcellularLocation>
        <location evidence="1">Nucleus</location>
    </subcellularLocation>
    <subcellularLocation>
        <location evidence="1">Cytoplasm</location>
    </subcellularLocation>
    <subcellularLocation>
        <location evidence="1">Cytoplasm</location>
        <location evidence="1">Perinuclear region</location>
    </subcellularLocation>
    <text evidence="1">Colocalizes with dynein-dynactin on the nuclear surface at the meiotic G2/prophase transition in primary spermatocytes. Nuclear location is required for recruitment of dynein motors to nuclear envelope at G2/M.</text>
</comment>
<comment type="PTM">
    <text evidence="1">Phosphorylated.</text>
</comment>
<comment type="similarity">
    <text evidence="4">Belongs to the Integrator subunit 13 family.</text>
</comment>
<gene>
    <name type="primary">asun</name>
    <name type="synonym">Mat89Bb</name>
    <name type="ORF">GK13769</name>
</gene>
<sequence>MFERNQKTIFVLDHTRYFSIASEEYISMEYLKGKQTGLEAGANGGTQFSKSLWTCACESSIEYCRVVWDLFPGTKHVRFIVSDTAAHIVNTWSPSTQNMSHVMNAMVMVGVPSMPQSSDSSVIHGLRAAIEALAEPTDEQMQAMGGKQTLHIPNEGRVICITSARDNTSMKSLEDIFHTVLVQQNSLMTSPPSKKGLPIDHCHLVILNIVPLGVESLVTNRSLLEISPLLNVEIHTVPAPDISYKLTHLILDHYELASTTVTNIPMKEEQNANSSANYDVEILHSRQAHTIAGGPDFNLPTSIKTGSTYETVTLKWCTPRGCSSADLQPCLGQFRVTPVDVTSRPSSCLINFLLNGRSVLLEMPRKTGTKATSHMLSARGGEIFVHALSILRSCMDEAPAIQDGPGGRVTDYRFGELGQLIKLSRMIPLKAKDPSHPTHSTLRRRLPRYFPWTTSSSILFNLQRQINWLPHFLHLLVKEDMDKQDEVRCQQHIHELYKSASRGDMLPFTNSNGGRLKLSKAKDQYRLLYRELEQLIQLNSFTPHHKNLLESLQSLRSAYGDAPTKSESANALLRSYTESPLSPERLEPTSSSSSNSLLKARKRRMSTCGQRSLFDIISSAERSQSNKRLDFSGRLCTLPGQVAKLYPDFGNKDKDSLVIAGGVASTTASAKEESIRG</sequence>
<protein>
    <recommendedName>
        <fullName>Protein asunder</fullName>
    </recommendedName>
    <alternativeName>
        <fullName evidence="1">Cell cycle regulator Mat89Bb</fullName>
    </alternativeName>
    <alternativeName>
        <fullName evidence="1">Maternal transcript 89Bb</fullName>
    </alternativeName>
    <alternativeName>
        <fullName>Set apart in position or space protein</fullName>
    </alternativeName>
</protein>
<accession>B4NIM7</accession>
<proteinExistence type="inferred from homology"/>
<name>INT13_DROWI</name>
<evidence type="ECO:0000250" key="1">
    <source>
        <dbReference type="UniProtKB" id="Q9VEX5"/>
    </source>
</evidence>
<evidence type="ECO:0000255" key="2"/>
<evidence type="ECO:0000256" key="3">
    <source>
        <dbReference type="SAM" id="MobiDB-lite"/>
    </source>
</evidence>
<evidence type="ECO:0000305" key="4"/>
<evidence type="ECO:0000312" key="5">
    <source>
        <dbReference type="EMBL" id="EDW83741.1"/>
    </source>
</evidence>
<feature type="chain" id="PRO_0000385349" description="Protein asunder">
    <location>
        <begin position="1"/>
        <end position="677"/>
    </location>
</feature>
<feature type="region of interest" description="Disordered" evidence="3">
    <location>
        <begin position="578"/>
        <end position="604"/>
    </location>
</feature>
<feature type="coiled-coil region" evidence="2">
    <location>
        <begin position="515"/>
        <end position="540"/>
    </location>
</feature>
<feature type="short sequence motif" description="Nuclear localization signal (NLS)" evidence="1">
    <location>
        <begin position="598"/>
        <end position="604"/>
    </location>
</feature>
<feature type="compositionally biased region" description="Low complexity" evidence="3">
    <location>
        <begin position="578"/>
        <end position="598"/>
    </location>
</feature>
<dbReference type="EMBL" id="CH964272">
    <property type="protein sequence ID" value="EDW83741.1"/>
    <property type="molecule type" value="Genomic_DNA"/>
</dbReference>
<dbReference type="SMR" id="B4NIM7"/>
<dbReference type="STRING" id="7260.B4NIM7"/>
<dbReference type="EnsemblMetazoa" id="FBtr0244420">
    <property type="protein sequence ID" value="FBpp0242912"/>
    <property type="gene ID" value="FBgn0215777"/>
</dbReference>
<dbReference type="EnsemblMetazoa" id="XM_002072719.4">
    <property type="protein sequence ID" value="XP_002072755.1"/>
    <property type="gene ID" value="LOC6650978"/>
</dbReference>
<dbReference type="GeneID" id="6650978"/>
<dbReference type="KEGG" id="dwi:6650978"/>
<dbReference type="CTD" id="41971"/>
<dbReference type="eggNOG" id="KOG3711">
    <property type="taxonomic scope" value="Eukaryota"/>
</dbReference>
<dbReference type="HOGENOM" id="CLU_012654_1_0_1"/>
<dbReference type="OMA" id="NCTAMHR"/>
<dbReference type="OrthoDB" id="5844105at2759"/>
<dbReference type="PhylomeDB" id="B4NIM7"/>
<dbReference type="Proteomes" id="UP000007798">
    <property type="component" value="Unassembled WGS sequence"/>
</dbReference>
<dbReference type="GO" id="GO:0005737">
    <property type="term" value="C:cytoplasm"/>
    <property type="evidence" value="ECO:0000250"/>
    <property type="project" value="UniProtKB"/>
</dbReference>
<dbReference type="GO" id="GO:0160232">
    <property type="term" value="C:INTAC complex"/>
    <property type="evidence" value="ECO:0007669"/>
    <property type="project" value="EnsemblMetazoa"/>
</dbReference>
<dbReference type="GO" id="GO:0032039">
    <property type="term" value="C:integrator complex"/>
    <property type="evidence" value="ECO:0007669"/>
    <property type="project" value="EnsemblMetazoa"/>
</dbReference>
<dbReference type="GO" id="GO:0005634">
    <property type="term" value="C:nucleus"/>
    <property type="evidence" value="ECO:0000250"/>
    <property type="project" value="UniProtKB"/>
</dbReference>
<dbReference type="GO" id="GO:0048471">
    <property type="term" value="C:perinuclear region of cytoplasm"/>
    <property type="evidence" value="ECO:0007669"/>
    <property type="project" value="UniProtKB-SubCell"/>
</dbReference>
<dbReference type="GO" id="GO:0051301">
    <property type="term" value="P:cell division"/>
    <property type="evidence" value="ECO:0007669"/>
    <property type="project" value="UniProtKB-KW"/>
</dbReference>
<dbReference type="GO" id="GO:0051642">
    <property type="term" value="P:centrosome localization"/>
    <property type="evidence" value="ECO:0007669"/>
    <property type="project" value="EnsemblMetazoa"/>
</dbReference>
<dbReference type="GO" id="GO:0046843">
    <property type="term" value="P:dorsal appendage formation"/>
    <property type="evidence" value="ECO:0007669"/>
    <property type="project" value="EnsemblMetazoa"/>
</dbReference>
<dbReference type="GO" id="GO:0030317">
    <property type="term" value="P:flagellated sperm motility"/>
    <property type="evidence" value="ECO:0000250"/>
    <property type="project" value="UniProtKB"/>
</dbReference>
<dbReference type="GO" id="GO:0051321">
    <property type="term" value="P:meiotic cell cycle"/>
    <property type="evidence" value="ECO:0007669"/>
    <property type="project" value="UniProtKB-KW"/>
</dbReference>
<dbReference type="GO" id="GO:0051663">
    <property type="term" value="P:oocyte nucleus localization involved in oocyte dorsal/ventral axis specification"/>
    <property type="evidence" value="ECO:0007669"/>
    <property type="project" value="EnsemblMetazoa"/>
</dbReference>
<dbReference type="GO" id="GO:0060814">
    <property type="term" value="P:posterior mRNA localization involved in anterior/posterior axis specification"/>
    <property type="evidence" value="ECO:0007669"/>
    <property type="project" value="EnsemblMetazoa"/>
</dbReference>
<dbReference type="GO" id="GO:0080154">
    <property type="term" value="P:regulation of fertilization"/>
    <property type="evidence" value="ECO:0000250"/>
    <property type="project" value="UniProtKB"/>
</dbReference>
<dbReference type="GO" id="GO:0007346">
    <property type="term" value="P:regulation of mitotic cell cycle"/>
    <property type="evidence" value="ECO:0000250"/>
    <property type="project" value="UniProtKB"/>
</dbReference>
<dbReference type="GO" id="GO:0160240">
    <property type="term" value="P:RNA polymerase II transcription initiation surveillance"/>
    <property type="evidence" value="ECO:0007669"/>
    <property type="project" value="EnsemblMetazoa"/>
</dbReference>
<dbReference type="GO" id="GO:0034472">
    <property type="term" value="P:snRNA 3'-end processing"/>
    <property type="evidence" value="ECO:0007669"/>
    <property type="project" value="EnsemblMetazoa"/>
</dbReference>
<dbReference type="GO" id="GO:0007283">
    <property type="term" value="P:spermatogenesis"/>
    <property type="evidence" value="ECO:0007669"/>
    <property type="project" value="UniProtKB-KW"/>
</dbReference>
<dbReference type="InterPro" id="IPR019355">
    <property type="entry name" value="Cell_cycle_regulator_Mat89Bb"/>
</dbReference>
<dbReference type="PANTHER" id="PTHR12955:SF1">
    <property type="entry name" value="INTEGRATOR COMPLEX SUBUNIT 13"/>
    <property type="match status" value="1"/>
</dbReference>
<dbReference type="PANTHER" id="PTHR12955">
    <property type="entry name" value="SARCOMA ANTIGEN NY-SAR-95-RELATED"/>
    <property type="match status" value="1"/>
</dbReference>
<dbReference type="Pfam" id="PF10221">
    <property type="entry name" value="Mat89Bb"/>
    <property type="match status" value="2"/>
</dbReference>
<keyword id="KW-0131">Cell cycle</keyword>
<keyword id="KW-0132">Cell division</keyword>
<keyword id="KW-0175">Coiled coil</keyword>
<keyword id="KW-0963">Cytoplasm</keyword>
<keyword id="KW-0217">Developmental protein</keyword>
<keyword id="KW-0221">Differentiation</keyword>
<keyword id="KW-0469">Meiosis</keyword>
<keyword id="KW-0498">Mitosis</keyword>
<keyword id="KW-0539">Nucleus</keyword>
<keyword id="KW-0597">Phosphoprotein</keyword>
<keyword id="KW-1185">Reference proteome</keyword>
<keyword id="KW-0744">Spermatogenesis</keyword>
<reference evidence="5" key="1">
    <citation type="journal article" date="2007" name="Nature">
        <title>Evolution of genes and genomes on the Drosophila phylogeny.</title>
        <authorList>
            <consortium name="Drosophila 12 genomes consortium"/>
        </authorList>
    </citation>
    <scope>NUCLEOTIDE SEQUENCE [LARGE SCALE GENOMIC DNA]</scope>
    <source>
        <strain evidence="5">Tucson 14030-0811.24</strain>
    </source>
</reference>